<sequence>MFKNQYDTDTTTWSPTGRLFQVEYANEAVNNGSAAVGVKGADYVVLTALKRNPVSGLSSYQEKAFKLDEHVGMAISGLVADGRALSRFLRTECMNYRYMHDSDAPLVMLADIVGAKHQRHIQFAGKRPFGVGLLIAGYDRQGPRLYQTVPSGDVFDFKATAMGLRSQAARTYLERHFRGFPACDLDELVMHALRALGAATSGGVELNIKNTTIAIVGKGTPFTILTEEEARKYLDGFKTRPEDIPAVADNEEDDDELHEQPPDVEE</sequence>
<feature type="chain" id="PRO_0000124070" description="Proteasome subunit alpha type-1">
    <location>
        <begin position="1"/>
        <end position="266"/>
    </location>
</feature>
<feature type="region of interest" description="Disordered" evidence="3">
    <location>
        <begin position="235"/>
        <end position="266"/>
    </location>
</feature>
<feature type="compositionally biased region" description="Acidic residues" evidence="3">
    <location>
        <begin position="249"/>
        <end position="266"/>
    </location>
</feature>
<proteinExistence type="evidence at transcript level"/>
<evidence type="ECO:0000250" key="1"/>
<evidence type="ECO:0000255" key="2">
    <source>
        <dbReference type="PROSITE-ProRule" id="PRU00808"/>
    </source>
</evidence>
<evidence type="ECO:0000256" key="3">
    <source>
        <dbReference type="SAM" id="MobiDB-lite"/>
    </source>
</evidence>
<name>PSA1_TRYBR</name>
<accession>O96788</accession>
<reference key="1">
    <citation type="submission" date="1998-11" db="EMBL/GenBank/DDBJ databases">
        <title>Identification and isolation of three proteasome subunits and their encoding genes from Trypanasoma brucei.</title>
        <authorList>
            <person name="Huang L."/>
            <person name="Shen M."/>
            <person name="Chernushevich I."/>
            <person name="Burlingame A.L."/>
            <person name="Wang C.C."/>
            <person name="Robertson C.D."/>
        </authorList>
    </citation>
    <scope>NUCLEOTIDE SEQUENCE [MRNA]</scope>
    <source>
        <strain>WRATat 1.1</strain>
    </source>
</reference>
<comment type="function">
    <text>The proteasome is a multicatalytic proteinase complex which is characterized by its ability to cleave peptides with Arg, Phe, Tyr, Leu, and Glu adjacent to the leaving group at neutral or slightly basic pH. The proteasome has an ATP-dependent proteolytic activity.</text>
</comment>
<comment type="subunit">
    <text evidence="1">The 26S proteasome consists of a 20S proteasome core and two 19S regulatory subunits. The 20S proteasome core is composed of 28 subunits that are arranged in four stacked rings, resulting in a barrel-shaped structure. The two end rings are each formed by seven alpha subunits, and the two central rings are each formed by seven beta subunits. The catalytic chamber with the active sites is on the inside of the barrel (By similarity).</text>
</comment>
<comment type="subcellular location">
    <subcellularLocation>
        <location evidence="1">Cytoplasm</location>
    </subcellularLocation>
    <subcellularLocation>
        <location evidence="1">Nucleus</location>
    </subcellularLocation>
</comment>
<comment type="similarity">
    <text evidence="2">Belongs to the peptidase T1A family.</text>
</comment>
<organism>
    <name type="scientific">Trypanosoma brucei rhodesiense</name>
    <dbReference type="NCBI Taxonomy" id="31286"/>
    <lineage>
        <taxon>Eukaryota</taxon>
        <taxon>Discoba</taxon>
        <taxon>Euglenozoa</taxon>
        <taxon>Kinetoplastea</taxon>
        <taxon>Metakinetoplastina</taxon>
        <taxon>Trypanosomatida</taxon>
        <taxon>Trypanosomatidae</taxon>
        <taxon>Trypanosoma</taxon>
    </lineage>
</organism>
<dbReference type="EMBL" id="AJ131148">
    <property type="protein sequence ID" value="CAA10314.1"/>
    <property type="molecule type" value="mRNA"/>
</dbReference>
<dbReference type="SMR" id="O96788"/>
<dbReference type="BRENDA" id="3.4.25.1">
    <property type="organism ID" value="6519"/>
</dbReference>
<dbReference type="GO" id="GO:0005737">
    <property type="term" value="C:cytoplasm"/>
    <property type="evidence" value="ECO:0007669"/>
    <property type="project" value="UniProtKB-SubCell"/>
</dbReference>
<dbReference type="GO" id="GO:0005634">
    <property type="term" value="C:nucleus"/>
    <property type="evidence" value="ECO:0007669"/>
    <property type="project" value="UniProtKB-SubCell"/>
</dbReference>
<dbReference type="GO" id="GO:0019773">
    <property type="term" value="C:proteasome core complex, alpha-subunit complex"/>
    <property type="evidence" value="ECO:0000250"/>
    <property type="project" value="UniProtKB"/>
</dbReference>
<dbReference type="GO" id="GO:0006511">
    <property type="term" value="P:ubiquitin-dependent protein catabolic process"/>
    <property type="evidence" value="ECO:0007669"/>
    <property type="project" value="InterPro"/>
</dbReference>
<dbReference type="CDD" id="cd03749">
    <property type="entry name" value="proteasome_alpha_type_1"/>
    <property type="match status" value="1"/>
</dbReference>
<dbReference type="FunFam" id="3.60.20.10:FF:000016">
    <property type="entry name" value="Proteasome subunit alpha type-6"/>
    <property type="match status" value="1"/>
</dbReference>
<dbReference type="Gene3D" id="3.60.20.10">
    <property type="entry name" value="Glutamine Phosphoribosylpyrophosphate, subunit 1, domain 1"/>
    <property type="match status" value="1"/>
</dbReference>
<dbReference type="InterPro" id="IPR029055">
    <property type="entry name" value="Ntn_hydrolases_N"/>
</dbReference>
<dbReference type="InterPro" id="IPR050115">
    <property type="entry name" value="Proteasome_alpha"/>
</dbReference>
<dbReference type="InterPro" id="IPR023332">
    <property type="entry name" value="Proteasome_alpha-type"/>
</dbReference>
<dbReference type="InterPro" id="IPR035144">
    <property type="entry name" value="Proteasome_alpha1"/>
</dbReference>
<dbReference type="InterPro" id="IPR000426">
    <property type="entry name" value="Proteasome_asu_N"/>
</dbReference>
<dbReference type="InterPro" id="IPR001353">
    <property type="entry name" value="Proteasome_sua/b"/>
</dbReference>
<dbReference type="PANTHER" id="PTHR11599">
    <property type="entry name" value="PROTEASOME SUBUNIT ALPHA/BETA"/>
    <property type="match status" value="1"/>
</dbReference>
<dbReference type="Pfam" id="PF00227">
    <property type="entry name" value="Proteasome"/>
    <property type="match status" value="1"/>
</dbReference>
<dbReference type="Pfam" id="PF10584">
    <property type="entry name" value="Proteasome_A_N"/>
    <property type="match status" value="1"/>
</dbReference>
<dbReference type="SMART" id="SM00948">
    <property type="entry name" value="Proteasome_A_N"/>
    <property type="match status" value="1"/>
</dbReference>
<dbReference type="SUPFAM" id="SSF56235">
    <property type="entry name" value="N-terminal nucleophile aminohydrolases (Ntn hydrolases)"/>
    <property type="match status" value="1"/>
</dbReference>
<dbReference type="PROSITE" id="PS00388">
    <property type="entry name" value="PROTEASOME_ALPHA_1"/>
    <property type="match status" value="1"/>
</dbReference>
<dbReference type="PROSITE" id="PS51475">
    <property type="entry name" value="PROTEASOME_ALPHA_2"/>
    <property type="match status" value="1"/>
</dbReference>
<keyword id="KW-0963">Cytoplasm</keyword>
<keyword id="KW-0539">Nucleus</keyword>
<keyword id="KW-0647">Proteasome</keyword>
<protein>
    <recommendedName>
        <fullName>Proteasome subunit alpha type-1</fullName>
    </recommendedName>
    <alternativeName>
        <fullName>20S proteasome subunit alpha-6</fullName>
    </alternativeName>
</protein>